<proteinExistence type="inferred from homology"/>
<keyword id="KW-0119">Carbohydrate metabolism</keyword>
<keyword id="KW-0963">Cytoplasm</keyword>
<keyword id="KW-0294">Fucose metabolism</keyword>
<keyword id="KW-0413">Isomerase</keyword>
<organism>
    <name type="scientific">Escherichia coli (strain ATCC 8739 / DSM 1576 / NBRC 3972 / NCIMB 8545 / WDCM 00012 / Crooks)</name>
    <dbReference type="NCBI Taxonomy" id="481805"/>
    <lineage>
        <taxon>Bacteria</taxon>
        <taxon>Pseudomonadati</taxon>
        <taxon>Pseudomonadota</taxon>
        <taxon>Gammaproteobacteria</taxon>
        <taxon>Enterobacterales</taxon>
        <taxon>Enterobacteriaceae</taxon>
        <taxon>Escherichia</taxon>
    </lineage>
</organism>
<evidence type="ECO:0000255" key="1">
    <source>
        <dbReference type="HAMAP-Rule" id="MF_01662"/>
    </source>
</evidence>
<protein>
    <recommendedName>
        <fullName evidence="1">L-fucose mutarotase</fullName>
        <ecNumber evidence="1">5.1.3.29</ecNumber>
    </recommendedName>
    <alternativeName>
        <fullName evidence="1">Fucose 1-epimerase</fullName>
    </alternativeName>
    <alternativeName>
        <fullName evidence="1">Type-2 mutarotase</fullName>
    </alternativeName>
</protein>
<comment type="function">
    <text evidence="1">Involved in the anomeric conversion of L-fucose.</text>
</comment>
<comment type="catalytic activity">
    <reaction evidence="1">
        <text>alpha-L-fucose = beta-L-fucose</text>
        <dbReference type="Rhea" id="RHEA:25580"/>
        <dbReference type="ChEBI" id="CHEBI:42548"/>
        <dbReference type="ChEBI" id="CHEBI:42589"/>
        <dbReference type="EC" id="5.1.3.29"/>
    </reaction>
</comment>
<comment type="pathway">
    <text evidence="1">Carbohydrate metabolism; L-fucose metabolism.</text>
</comment>
<comment type="subunit">
    <text evidence="1">Homodecamer.</text>
</comment>
<comment type="subcellular location">
    <subcellularLocation>
        <location evidence="1">Cytoplasm</location>
    </subcellularLocation>
</comment>
<comment type="similarity">
    <text evidence="1">Belongs to the RbsD / FucU family. FucU mutarotase subfamily.</text>
</comment>
<reference key="1">
    <citation type="submission" date="2008-02" db="EMBL/GenBank/DDBJ databases">
        <title>Complete sequence of Escherichia coli C str. ATCC 8739.</title>
        <authorList>
            <person name="Copeland A."/>
            <person name="Lucas S."/>
            <person name="Lapidus A."/>
            <person name="Glavina del Rio T."/>
            <person name="Dalin E."/>
            <person name="Tice H."/>
            <person name="Bruce D."/>
            <person name="Goodwin L."/>
            <person name="Pitluck S."/>
            <person name="Kiss H."/>
            <person name="Brettin T."/>
            <person name="Detter J.C."/>
            <person name="Han C."/>
            <person name="Kuske C.R."/>
            <person name="Schmutz J."/>
            <person name="Larimer F."/>
            <person name="Land M."/>
            <person name="Hauser L."/>
            <person name="Kyrpides N."/>
            <person name="Mikhailova N."/>
            <person name="Ingram L."/>
            <person name="Richardson P."/>
        </authorList>
    </citation>
    <scope>NUCLEOTIDE SEQUENCE [LARGE SCALE GENOMIC DNA]</scope>
    <source>
        <strain>ATCC 8739 / DSM 1576 / NBRC 3972 / NCIMB 8545 / WDCM 00012 / Crooks</strain>
    </source>
</reference>
<accession>B1IU37</accession>
<name>FUCM_ECOLC</name>
<sequence>MLKTISPLISPELLKVLAEMGHGDEIIFSDAHFPAHSMGPQVIRADGLLVSDLLQAIIPLFELDSYAPPLVMMAAVEGDTLDPEVERRYRNALSLQAPCPDIIRINRFAFYERAQKAFAIVITGERAKYGNILLKKGVTP</sequence>
<dbReference type="EC" id="5.1.3.29" evidence="1"/>
<dbReference type="EMBL" id="CP000946">
    <property type="protein sequence ID" value="ACA76577.1"/>
    <property type="molecule type" value="Genomic_DNA"/>
</dbReference>
<dbReference type="RefSeq" id="WP_000920840.1">
    <property type="nucleotide sequence ID" value="NZ_MTFT01000004.1"/>
</dbReference>
<dbReference type="SMR" id="B1IU37"/>
<dbReference type="GeneID" id="93779194"/>
<dbReference type="KEGG" id="ecl:EcolC_0908"/>
<dbReference type="HOGENOM" id="CLU_120075_1_0_6"/>
<dbReference type="UniPathway" id="UPA00956"/>
<dbReference type="GO" id="GO:0005737">
    <property type="term" value="C:cytoplasm"/>
    <property type="evidence" value="ECO:0007669"/>
    <property type="project" value="UniProtKB-SubCell"/>
</dbReference>
<dbReference type="GO" id="GO:0042806">
    <property type="term" value="F:fucose binding"/>
    <property type="evidence" value="ECO:0007669"/>
    <property type="project" value="InterPro"/>
</dbReference>
<dbReference type="GO" id="GO:0036373">
    <property type="term" value="F:L-fucose mutarotase activity"/>
    <property type="evidence" value="ECO:0007669"/>
    <property type="project" value="UniProtKB-EC"/>
</dbReference>
<dbReference type="GO" id="GO:0036065">
    <property type="term" value="P:fucosylation"/>
    <property type="evidence" value="ECO:0007669"/>
    <property type="project" value="TreeGrafter"/>
</dbReference>
<dbReference type="GO" id="GO:0042354">
    <property type="term" value="P:L-fucose metabolic process"/>
    <property type="evidence" value="ECO:0007669"/>
    <property type="project" value="UniProtKB-UniRule"/>
</dbReference>
<dbReference type="FunFam" id="3.40.1650.10:FF:000001">
    <property type="entry name" value="L-fucose mutarotase"/>
    <property type="match status" value="1"/>
</dbReference>
<dbReference type="Gene3D" id="3.40.1650.10">
    <property type="entry name" value="RbsD-like domain"/>
    <property type="match status" value="1"/>
</dbReference>
<dbReference type="HAMAP" id="MF_01662">
    <property type="entry name" value="L_fucose_rotase"/>
    <property type="match status" value="1"/>
</dbReference>
<dbReference type="InterPro" id="IPR023751">
    <property type="entry name" value="L-fucose_mutarotase"/>
</dbReference>
<dbReference type="InterPro" id="IPR023750">
    <property type="entry name" value="RbsD-like_sf"/>
</dbReference>
<dbReference type="InterPro" id="IPR050443">
    <property type="entry name" value="RbsD/FucU_mutarotase"/>
</dbReference>
<dbReference type="InterPro" id="IPR007721">
    <property type="entry name" value="RbsD_FucU"/>
</dbReference>
<dbReference type="NCBIfam" id="NF011949">
    <property type="entry name" value="PRK15420.1"/>
    <property type="match status" value="1"/>
</dbReference>
<dbReference type="PANTHER" id="PTHR31690">
    <property type="entry name" value="FUCOSE MUTAROTASE"/>
    <property type="match status" value="1"/>
</dbReference>
<dbReference type="PANTHER" id="PTHR31690:SF4">
    <property type="entry name" value="FUCOSE MUTAROTASE"/>
    <property type="match status" value="1"/>
</dbReference>
<dbReference type="Pfam" id="PF05025">
    <property type="entry name" value="RbsD_FucU"/>
    <property type="match status" value="1"/>
</dbReference>
<dbReference type="SUPFAM" id="SSF102546">
    <property type="entry name" value="RbsD-like"/>
    <property type="match status" value="1"/>
</dbReference>
<feature type="chain" id="PRO_0000344538" description="L-fucose mutarotase">
    <location>
        <begin position="1"/>
        <end position="140"/>
    </location>
</feature>
<feature type="active site" description="Proton donor" evidence="1">
    <location>
        <position position="22"/>
    </location>
</feature>
<feature type="binding site" evidence="1">
    <location>
        <position position="30"/>
    </location>
    <ligand>
        <name>substrate</name>
    </ligand>
</feature>
<feature type="binding site" evidence="1">
    <location>
        <position position="107"/>
    </location>
    <ligand>
        <name>substrate</name>
    </ligand>
</feature>
<feature type="binding site" evidence="1">
    <location>
        <begin position="129"/>
        <end position="131"/>
    </location>
    <ligand>
        <name>substrate</name>
    </ligand>
</feature>
<gene>
    <name evidence="1" type="primary">fucU</name>
    <name type="ordered locus">EcolC_0908</name>
</gene>